<sequence length="1177" mass="131893">MTGQLVQYGRHRQRRSYARISEVLELPNLIEIQTSSYQWFLDEGLREMFQDISPIEDFTGNLSLEFIDYSLGEPKYSVDECKERDVTYAAPLRVKVRLINKETGEVKEQDVFMGDFPLMTETGTFVINGAERVIVSQLVRSPSVYYSGKVDKNGKRGFTATVIPNRGAWLEYETDAKDVVYVRIDRTRKLPVTVLLRALGFGSDQEITELLGDNEYLSNTLEKDNTDSTEKALLEIYERLRPGEPPTVENAKSLLVSRFFDPKRYDLANVGRYKINKKLHIKNRLFNQRLAETLVDPETGEILAAEGTILDRRTLDRILPYLEKNIGFKTAKPMGGVVEGDVELQSIKIYAPESEGERVINVIGNANITRDVKHITPGDILASISYFFNLLYKVGDTDDIDHLGNRRLRSVGELLQNQFRIGLSRMERVVRERMSIQDTNAITPQALINIRPVIASIKEFFGSSQLSQFMDQTNPLAELTHKRRLSALGPGGLTRERAGFEVRDVHYSHYGRMCPIETPEGPNIGLINSLSSFAKVNEFGFIETPYRRVDPETGLVTGHVDYLTADEEDNYVVAQANMKLSEEGEFLDEDIVARFRGENIVTNKERIDYMDVSPKQVVSAATACIPFLENDDSNRALMGANMQRQAVPLMNPESPIVGTGMEYVSAKDSGAAVICKHPGIVERVEAREVWVRRYVEVDGQTVKGDLDRYKMQKFIRSNQGTCYNQRPIVSVGNEVVKGEILADGPSMELGELALGRNVLVGFMTWDGYNYEDAIIMSERLVKDDVYTSIHIEEYESEARDTKLGPEEITRDIPNVGEDALRNLDERGIIRVGAEVKDGDLLVGKVTPKGVTELTAEERLLHAIFGEKAREVRDTSLRVPHGGGGIILDVKVFNREDGDELPPGVNQLVRAYIVQKRKISEGDKMAGRHGNKGVISRILPEEDMPYLPDGTPIDIMLNPLGVPSRMNIGQVLELHLGMAARYLGIHIATPVFDGAREEDVWGTIEEAGMANDAKTILYDGRTGEPFDNRVSVGVMYMIKLAHMVDDKLHARSTGPYSLVTQQPLGGKAQFGGQRFGEMEVWALEAYGAAYTLQEILTVKSDDVVGRVKTYEAIVKGENVPEPGVPESFKVLIKELQSLGMDVKMMSSDDTEIEMRDTEDDDDHQSADKLNVEVETTKE</sequence>
<gene>
    <name evidence="1" type="primary">rpoB</name>
    <name type="ordered locus">BCE_0102</name>
</gene>
<feature type="chain" id="PRO_0000224025" description="DNA-directed RNA polymerase subunit beta">
    <location>
        <begin position="1"/>
        <end position="1177"/>
    </location>
</feature>
<feature type="region of interest" description="Disordered" evidence="2">
    <location>
        <begin position="1147"/>
        <end position="1177"/>
    </location>
</feature>
<feature type="compositionally biased region" description="Acidic residues" evidence="2">
    <location>
        <begin position="1147"/>
        <end position="1161"/>
    </location>
</feature>
<feature type="compositionally biased region" description="Basic and acidic residues" evidence="2">
    <location>
        <begin position="1162"/>
        <end position="1177"/>
    </location>
</feature>
<dbReference type="EC" id="2.7.7.6" evidence="1"/>
<dbReference type="EMBL" id="AE017194">
    <property type="protein sequence ID" value="AAS39038.1"/>
    <property type="molecule type" value="Genomic_DNA"/>
</dbReference>
<dbReference type="SMR" id="Q73FA4"/>
<dbReference type="KEGG" id="bca:BCE_0102"/>
<dbReference type="HOGENOM" id="CLU_000524_4_1_9"/>
<dbReference type="Proteomes" id="UP000002527">
    <property type="component" value="Chromosome"/>
</dbReference>
<dbReference type="GO" id="GO:0000428">
    <property type="term" value="C:DNA-directed RNA polymerase complex"/>
    <property type="evidence" value="ECO:0007669"/>
    <property type="project" value="UniProtKB-KW"/>
</dbReference>
<dbReference type="GO" id="GO:0003677">
    <property type="term" value="F:DNA binding"/>
    <property type="evidence" value="ECO:0007669"/>
    <property type="project" value="UniProtKB-UniRule"/>
</dbReference>
<dbReference type="GO" id="GO:0003899">
    <property type="term" value="F:DNA-directed RNA polymerase activity"/>
    <property type="evidence" value="ECO:0007669"/>
    <property type="project" value="UniProtKB-UniRule"/>
</dbReference>
<dbReference type="GO" id="GO:0032549">
    <property type="term" value="F:ribonucleoside binding"/>
    <property type="evidence" value="ECO:0007669"/>
    <property type="project" value="InterPro"/>
</dbReference>
<dbReference type="GO" id="GO:0006351">
    <property type="term" value="P:DNA-templated transcription"/>
    <property type="evidence" value="ECO:0007669"/>
    <property type="project" value="UniProtKB-UniRule"/>
</dbReference>
<dbReference type="CDD" id="cd00653">
    <property type="entry name" value="RNA_pol_B_RPB2"/>
    <property type="match status" value="1"/>
</dbReference>
<dbReference type="FunFam" id="3.90.1800.10:FF:000001">
    <property type="entry name" value="DNA-directed RNA polymerase subunit beta"/>
    <property type="match status" value="1"/>
</dbReference>
<dbReference type="Gene3D" id="2.40.50.100">
    <property type="match status" value="1"/>
</dbReference>
<dbReference type="Gene3D" id="2.40.50.150">
    <property type="match status" value="1"/>
</dbReference>
<dbReference type="Gene3D" id="3.90.1100.10">
    <property type="match status" value="2"/>
</dbReference>
<dbReference type="Gene3D" id="2.30.150.10">
    <property type="entry name" value="DNA-directed RNA polymerase, beta subunit, external 1 domain"/>
    <property type="match status" value="1"/>
</dbReference>
<dbReference type="Gene3D" id="2.40.270.10">
    <property type="entry name" value="DNA-directed RNA polymerase, subunit 2, domain 6"/>
    <property type="match status" value="1"/>
</dbReference>
<dbReference type="Gene3D" id="3.90.1800.10">
    <property type="entry name" value="RNA polymerase alpha subunit dimerisation domain"/>
    <property type="match status" value="1"/>
</dbReference>
<dbReference type="Gene3D" id="3.90.1110.10">
    <property type="entry name" value="RNA polymerase Rpb2, domain 2"/>
    <property type="match status" value="1"/>
</dbReference>
<dbReference type="HAMAP" id="MF_01321">
    <property type="entry name" value="RNApol_bact_RpoB"/>
    <property type="match status" value="1"/>
</dbReference>
<dbReference type="InterPro" id="IPR042107">
    <property type="entry name" value="DNA-dir_RNA_pol_bsu_ext_1_sf"/>
</dbReference>
<dbReference type="InterPro" id="IPR019462">
    <property type="entry name" value="DNA-dir_RNA_pol_bsu_external_1"/>
</dbReference>
<dbReference type="InterPro" id="IPR015712">
    <property type="entry name" value="DNA-dir_RNA_pol_su2"/>
</dbReference>
<dbReference type="InterPro" id="IPR007120">
    <property type="entry name" value="DNA-dir_RNAP_su2_dom"/>
</dbReference>
<dbReference type="InterPro" id="IPR037033">
    <property type="entry name" value="DNA-dir_RNAP_su2_hyb_sf"/>
</dbReference>
<dbReference type="InterPro" id="IPR010243">
    <property type="entry name" value="RNA_pol_bsu_bac"/>
</dbReference>
<dbReference type="InterPro" id="IPR007121">
    <property type="entry name" value="RNA_pol_bsu_CS"/>
</dbReference>
<dbReference type="InterPro" id="IPR007644">
    <property type="entry name" value="RNA_pol_bsu_protrusion"/>
</dbReference>
<dbReference type="InterPro" id="IPR007642">
    <property type="entry name" value="RNA_pol_Rpb2_2"/>
</dbReference>
<dbReference type="InterPro" id="IPR037034">
    <property type="entry name" value="RNA_pol_Rpb2_2_sf"/>
</dbReference>
<dbReference type="InterPro" id="IPR007645">
    <property type="entry name" value="RNA_pol_Rpb2_3"/>
</dbReference>
<dbReference type="InterPro" id="IPR007641">
    <property type="entry name" value="RNA_pol_Rpb2_7"/>
</dbReference>
<dbReference type="InterPro" id="IPR014724">
    <property type="entry name" value="RNA_pol_RPB2_OB-fold"/>
</dbReference>
<dbReference type="NCBIfam" id="NF001616">
    <property type="entry name" value="PRK00405.1"/>
    <property type="match status" value="1"/>
</dbReference>
<dbReference type="NCBIfam" id="TIGR02013">
    <property type="entry name" value="rpoB"/>
    <property type="match status" value="1"/>
</dbReference>
<dbReference type="PANTHER" id="PTHR20856">
    <property type="entry name" value="DNA-DIRECTED RNA POLYMERASE I SUBUNIT 2"/>
    <property type="match status" value="1"/>
</dbReference>
<dbReference type="Pfam" id="PF04563">
    <property type="entry name" value="RNA_pol_Rpb2_1"/>
    <property type="match status" value="1"/>
</dbReference>
<dbReference type="Pfam" id="PF04561">
    <property type="entry name" value="RNA_pol_Rpb2_2"/>
    <property type="match status" value="2"/>
</dbReference>
<dbReference type="Pfam" id="PF04565">
    <property type="entry name" value="RNA_pol_Rpb2_3"/>
    <property type="match status" value="1"/>
</dbReference>
<dbReference type="Pfam" id="PF10385">
    <property type="entry name" value="RNA_pol_Rpb2_45"/>
    <property type="match status" value="1"/>
</dbReference>
<dbReference type="Pfam" id="PF00562">
    <property type="entry name" value="RNA_pol_Rpb2_6"/>
    <property type="match status" value="1"/>
</dbReference>
<dbReference type="Pfam" id="PF04560">
    <property type="entry name" value="RNA_pol_Rpb2_7"/>
    <property type="match status" value="1"/>
</dbReference>
<dbReference type="SUPFAM" id="SSF64484">
    <property type="entry name" value="beta and beta-prime subunits of DNA dependent RNA-polymerase"/>
    <property type="match status" value="1"/>
</dbReference>
<dbReference type="PROSITE" id="PS01166">
    <property type="entry name" value="RNA_POL_BETA"/>
    <property type="match status" value="1"/>
</dbReference>
<protein>
    <recommendedName>
        <fullName evidence="1">DNA-directed RNA polymerase subunit beta</fullName>
        <shortName evidence="1">RNAP subunit beta</shortName>
        <ecNumber evidence="1">2.7.7.6</ecNumber>
    </recommendedName>
    <alternativeName>
        <fullName evidence="1">RNA polymerase subunit beta</fullName>
    </alternativeName>
    <alternativeName>
        <fullName evidence="1">Transcriptase subunit beta</fullName>
    </alternativeName>
</protein>
<accession>Q73FA4</accession>
<evidence type="ECO:0000255" key="1">
    <source>
        <dbReference type="HAMAP-Rule" id="MF_01321"/>
    </source>
</evidence>
<evidence type="ECO:0000256" key="2">
    <source>
        <dbReference type="SAM" id="MobiDB-lite"/>
    </source>
</evidence>
<organism>
    <name type="scientific">Bacillus cereus (strain ATCC 10987 / NRS 248)</name>
    <dbReference type="NCBI Taxonomy" id="222523"/>
    <lineage>
        <taxon>Bacteria</taxon>
        <taxon>Bacillati</taxon>
        <taxon>Bacillota</taxon>
        <taxon>Bacilli</taxon>
        <taxon>Bacillales</taxon>
        <taxon>Bacillaceae</taxon>
        <taxon>Bacillus</taxon>
        <taxon>Bacillus cereus group</taxon>
    </lineage>
</organism>
<proteinExistence type="inferred from homology"/>
<keyword id="KW-0240">DNA-directed RNA polymerase</keyword>
<keyword id="KW-0548">Nucleotidyltransferase</keyword>
<keyword id="KW-0804">Transcription</keyword>
<keyword id="KW-0808">Transferase</keyword>
<name>RPOB_BACC1</name>
<reference key="1">
    <citation type="journal article" date="2004" name="Nucleic Acids Res.">
        <title>The genome sequence of Bacillus cereus ATCC 10987 reveals metabolic adaptations and a large plasmid related to Bacillus anthracis pXO1.</title>
        <authorList>
            <person name="Rasko D.A."/>
            <person name="Ravel J."/>
            <person name="Oekstad O.A."/>
            <person name="Helgason E."/>
            <person name="Cer R.Z."/>
            <person name="Jiang L."/>
            <person name="Shores K.A."/>
            <person name="Fouts D.E."/>
            <person name="Tourasse N.J."/>
            <person name="Angiuoli S.V."/>
            <person name="Kolonay J.F."/>
            <person name="Nelson W.C."/>
            <person name="Kolstoe A.-B."/>
            <person name="Fraser C.M."/>
            <person name="Read T.D."/>
        </authorList>
    </citation>
    <scope>NUCLEOTIDE SEQUENCE [LARGE SCALE GENOMIC DNA]</scope>
    <source>
        <strain>ATCC 10987 / NRS 248</strain>
    </source>
</reference>
<comment type="function">
    <text evidence="1">DNA-dependent RNA polymerase catalyzes the transcription of DNA into RNA using the four ribonucleoside triphosphates as substrates.</text>
</comment>
<comment type="catalytic activity">
    <reaction evidence="1">
        <text>RNA(n) + a ribonucleoside 5'-triphosphate = RNA(n+1) + diphosphate</text>
        <dbReference type="Rhea" id="RHEA:21248"/>
        <dbReference type="Rhea" id="RHEA-COMP:14527"/>
        <dbReference type="Rhea" id="RHEA-COMP:17342"/>
        <dbReference type="ChEBI" id="CHEBI:33019"/>
        <dbReference type="ChEBI" id="CHEBI:61557"/>
        <dbReference type="ChEBI" id="CHEBI:140395"/>
        <dbReference type="EC" id="2.7.7.6"/>
    </reaction>
</comment>
<comment type="subunit">
    <text evidence="1">The RNAP catalytic core consists of 2 alpha, 1 beta, 1 beta' and 1 omega subunit. When a sigma factor is associated with the core the holoenzyme is formed, which can initiate transcription.</text>
</comment>
<comment type="similarity">
    <text evidence="1">Belongs to the RNA polymerase beta chain family.</text>
</comment>